<protein>
    <recommendedName>
        <fullName evidence="1">DNA-directed RNA polymerase subunit beta'</fullName>
        <shortName evidence="1">RNAP subunit beta'</shortName>
        <ecNumber evidence="1">2.7.7.6</ecNumber>
    </recommendedName>
    <alternativeName>
        <fullName evidence="1">RNA polymerase subunit beta'</fullName>
    </alternativeName>
    <alternativeName>
        <fullName evidence="1">Transcriptase subunit beta'</fullName>
    </alternativeName>
</protein>
<dbReference type="EC" id="2.7.7.6" evidence="1"/>
<dbReference type="EMBL" id="AM286280">
    <property type="protein sequence ID" value="CAL08161.1"/>
    <property type="molecule type" value="Genomic_DNA"/>
</dbReference>
<dbReference type="RefSeq" id="WP_003019910.1">
    <property type="nucleotide sequence ID" value="NC_008245.1"/>
</dbReference>
<dbReference type="SMR" id="Q14JT4"/>
<dbReference type="KEGG" id="ftf:FTF0145"/>
<dbReference type="HOGENOM" id="CLU_000524_3_1_6"/>
<dbReference type="GO" id="GO:0000428">
    <property type="term" value="C:DNA-directed RNA polymerase complex"/>
    <property type="evidence" value="ECO:0007669"/>
    <property type="project" value="UniProtKB-KW"/>
</dbReference>
<dbReference type="GO" id="GO:0003677">
    <property type="term" value="F:DNA binding"/>
    <property type="evidence" value="ECO:0007669"/>
    <property type="project" value="UniProtKB-UniRule"/>
</dbReference>
<dbReference type="GO" id="GO:0003899">
    <property type="term" value="F:DNA-directed RNA polymerase activity"/>
    <property type="evidence" value="ECO:0007669"/>
    <property type="project" value="UniProtKB-UniRule"/>
</dbReference>
<dbReference type="GO" id="GO:0000287">
    <property type="term" value="F:magnesium ion binding"/>
    <property type="evidence" value="ECO:0007669"/>
    <property type="project" value="UniProtKB-UniRule"/>
</dbReference>
<dbReference type="GO" id="GO:0008270">
    <property type="term" value="F:zinc ion binding"/>
    <property type="evidence" value="ECO:0007669"/>
    <property type="project" value="UniProtKB-UniRule"/>
</dbReference>
<dbReference type="GO" id="GO:0006351">
    <property type="term" value="P:DNA-templated transcription"/>
    <property type="evidence" value="ECO:0007669"/>
    <property type="project" value="UniProtKB-UniRule"/>
</dbReference>
<dbReference type="CDD" id="cd02655">
    <property type="entry name" value="RNAP_beta'_C"/>
    <property type="match status" value="1"/>
</dbReference>
<dbReference type="CDD" id="cd01609">
    <property type="entry name" value="RNAP_beta'_N"/>
    <property type="match status" value="1"/>
</dbReference>
<dbReference type="FunFam" id="1.10.132.30:FF:000003">
    <property type="entry name" value="DNA-directed RNA polymerase subunit beta"/>
    <property type="match status" value="1"/>
</dbReference>
<dbReference type="Gene3D" id="1.10.132.30">
    <property type="match status" value="1"/>
</dbReference>
<dbReference type="Gene3D" id="1.10.150.390">
    <property type="match status" value="1"/>
</dbReference>
<dbReference type="Gene3D" id="1.10.1790.20">
    <property type="match status" value="1"/>
</dbReference>
<dbReference type="Gene3D" id="1.10.40.90">
    <property type="match status" value="1"/>
</dbReference>
<dbReference type="Gene3D" id="2.40.40.20">
    <property type="match status" value="1"/>
</dbReference>
<dbReference type="Gene3D" id="2.40.50.100">
    <property type="match status" value="3"/>
</dbReference>
<dbReference type="Gene3D" id="4.10.860.120">
    <property type="entry name" value="RNA polymerase II, clamp domain"/>
    <property type="match status" value="1"/>
</dbReference>
<dbReference type="Gene3D" id="1.10.274.100">
    <property type="entry name" value="RNA polymerase Rpb1, domain 3"/>
    <property type="match status" value="1"/>
</dbReference>
<dbReference type="HAMAP" id="MF_01322">
    <property type="entry name" value="RNApol_bact_RpoC"/>
    <property type="match status" value="1"/>
</dbReference>
<dbReference type="InterPro" id="IPR045867">
    <property type="entry name" value="DNA-dir_RpoC_beta_prime"/>
</dbReference>
<dbReference type="InterPro" id="IPR012754">
    <property type="entry name" value="DNA-dir_RpoC_beta_prime_bact"/>
</dbReference>
<dbReference type="InterPro" id="IPR000722">
    <property type="entry name" value="RNA_pol_asu"/>
</dbReference>
<dbReference type="InterPro" id="IPR006592">
    <property type="entry name" value="RNA_pol_N"/>
</dbReference>
<dbReference type="InterPro" id="IPR007080">
    <property type="entry name" value="RNA_pol_Rpb1_1"/>
</dbReference>
<dbReference type="InterPro" id="IPR007066">
    <property type="entry name" value="RNA_pol_Rpb1_3"/>
</dbReference>
<dbReference type="InterPro" id="IPR042102">
    <property type="entry name" value="RNA_pol_Rpb1_3_sf"/>
</dbReference>
<dbReference type="InterPro" id="IPR007083">
    <property type="entry name" value="RNA_pol_Rpb1_4"/>
</dbReference>
<dbReference type="InterPro" id="IPR007081">
    <property type="entry name" value="RNA_pol_Rpb1_5"/>
</dbReference>
<dbReference type="InterPro" id="IPR044893">
    <property type="entry name" value="RNA_pol_Rpb1_clamp_domain"/>
</dbReference>
<dbReference type="InterPro" id="IPR038120">
    <property type="entry name" value="Rpb1_funnel_sf"/>
</dbReference>
<dbReference type="NCBIfam" id="TIGR02386">
    <property type="entry name" value="rpoC_TIGR"/>
    <property type="match status" value="1"/>
</dbReference>
<dbReference type="PANTHER" id="PTHR19376">
    <property type="entry name" value="DNA-DIRECTED RNA POLYMERASE"/>
    <property type="match status" value="1"/>
</dbReference>
<dbReference type="PANTHER" id="PTHR19376:SF54">
    <property type="entry name" value="DNA-DIRECTED RNA POLYMERASE SUBUNIT BETA"/>
    <property type="match status" value="1"/>
</dbReference>
<dbReference type="Pfam" id="PF04997">
    <property type="entry name" value="RNA_pol_Rpb1_1"/>
    <property type="match status" value="1"/>
</dbReference>
<dbReference type="Pfam" id="PF00623">
    <property type="entry name" value="RNA_pol_Rpb1_2"/>
    <property type="match status" value="2"/>
</dbReference>
<dbReference type="Pfam" id="PF04983">
    <property type="entry name" value="RNA_pol_Rpb1_3"/>
    <property type="match status" value="1"/>
</dbReference>
<dbReference type="Pfam" id="PF05000">
    <property type="entry name" value="RNA_pol_Rpb1_4"/>
    <property type="match status" value="1"/>
</dbReference>
<dbReference type="Pfam" id="PF04998">
    <property type="entry name" value="RNA_pol_Rpb1_5"/>
    <property type="match status" value="1"/>
</dbReference>
<dbReference type="SMART" id="SM00663">
    <property type="entry name" value="RPOLA_N"/>
    <property type="match status" value="1"/>
</dbReference>
<dbReference type="SUPFAM" id="SSF64484">
    <property type="entry name" value="beta and beta-prime subunits of DNA dependent RNA-polymerase"/>
    <property type="match status" value="1"/>
</dbReference>
<accession>Q14JT4</accession>
<proteinExistence type="inferred from homology"/>
<reference key="1">
    <citation type="journal article" date="2007" name="PLoS ONE">
        <title>Genome sequencing shows that European isolates of Francisella tularensis subspecies tularensis are almost identical to US laboratory strain Schu S4.</title>
        <authorList>
            <person name="Chaudhuri R.R."/>
            <person name="Ren C.-P."/>
            <person name="Desmond L."/>
            <person name="Vincent G.A."/>
            <person name="Silman N.J."/>
            <person name="Brehm J.K."/>
            <person name="Elmore M.J."/>
            <person name="Hudson M.J."/>
            <person name="Forsman M."/>
            <person name="Isherwood K.E."/>
            <person name="Gurycova D."/>
            <person name="Minton N.P."/>
            <person name="Titball R.W."/>
            <person name="Pallen M.J."/>
            <person name="Vipond R."/>
        </authorList>
    </citation>
    <scope>NUCLEOTIDE SEQUENCE [LARGE SCALE GENOMIC DNA]</scope>
    <source>
        <strain>FSC 198</strain>
    </source>
</reference>
<comment type="function">
    <text evidence="1">DNA-dependent RNA polymerase catalyzes the transcription of DNA into RNA using the four ribonucleoside triphosphates as substrates.</text>
</comment>
<comment type="catalytic activity">
    <reaction evidence="1">
        <text>RNA(n) + a ribonucleoside 5'-triphosphate = RNA(n+1) + diphosphate</text>
        <dbReference type="Rhea" id="RHEA:21248"/>
        <dbReference type="Rhea" id="RHEA-COMP:14527"/>
        <dbReference type="Rhea" id="RHEA-COMP:17342"/>
        <dbReference type="ChEBI" id="CHEBI:33019"/>
        <dbReference type="ChEBI" id="CHEBI:61557"/>
        <dbReference type="ChEBI" id="CHEBI:140395"/>
        <dbReference type="EC" id="2.7.7.6"/>
    </reaction>
</comment>
<comment type="cofactor">
    <cofactor evidence="1">
        <name>Mg(2+)</name>
        <dbReference type="ChEBI" id="CHEBI:18420"/>
    </cofactor>
    <text evidence="1">Binds 1 Mg(2+) ion per subunit.</text>
</comment>
<comment type="cofactor">
    <cofactor evidence="1">
        <name>Zn(2+)</name>
        <dbReference type="ChEBI" id="CHEBI:29105"/>
    </cofactor>
    <text evidence="1">Binds 2 Zn(2+) ions per subunit.</text>
</comment>
<comment type="subunit">
    <text evidence="1">The RNAP catalytic core consists of 2 alpha, 1 beta, 1 beta' and 1 omega subunit. When a sigma factor is associated with the core the holoenzyme is formed, which can initiate transcription.</text>
</comment>
<comment type="similarity">
    <text evidence="1">Belongs to the RNA polymerase beta' chain family.</text>
</comment>
<feature type="chain" id="PRO_0000353371" description="DNA-directed RNA polymerase subunit beta'">
    <location>
        <begin position="1"/>
        <end position="1417"/>
    </location>
</feature>
<feature type="binding site" evidence="1">
    <location>
        <position position="68"/>
    </location>
    <ligand>
        <name>Zn(2+)</name>
        <dbReference type="ChEBI" id="CHEBI:29105"/>
        <label>1</label>
    </ligand>
</feature>
<feature type="binding site" evidence="1">
    <location>
        <position position="70"/>
    </location>
    <ligand>
        <name>Zn(2+)</name>
        <dbReference type="ChEBI" id="CHEBI:29105"/>
        <label>1</label>
    </ligand>
</feature>
<feature type="binding site" evidence="1">
    <location>
        <position position="83"/>
    </location>
    <ligand>
        <name>Zn(2+)</name>
        <dbReference type="ChEBI" id="CHEBI:29105"/>
        <label>1</label>
    </ligand>
</feature>
<feature type="binding site" evidence="1">
    <location>
        <position position="86"/>
    </location>
    <ligand>
        <name>Zn(2+)</name>
        <dbReference type="ChEBI" id="CHEBI:29105"/>
        <label>1</label>
    </ligand>
</feature>
<feature type="binding site" evidence="1">
    <location>
        <position position="458"/>
    </location>
    <ligand>
        <name>Mg(2+)</name>
        <dbReference type="ChEBI" id="CHEBI:18420"/>
    </ligand>
</feature>
<feature type="binding site" evidence="1">
    <location>
        <position position="460"/>
    </location>
    <ligand>
        <name>Mg(2+)</name>
        <dbReference type="ChEBI" id="CHEBI:18420"/>
    </ligand>
</feature>
<feature type="binding site" evidence="1">
    <location>
        <position position="462"/>
    </location>
    <ligand>
        <name>Mg(2+)</name>
        <dbReference type="ChEBI" id="CHEBI:18420"/>
    </ligand>
</feature>
<feature type="binding site" evidence="1">
    <location>
        <position position="811"/>
    </location>
    <ligand>
        <name>Zn(2+)</name>
        <dbReference type="ChEBI" id="CHEBI:29105"/>
        <label>2</label>
    </ligand>
</feature>
<feature type="binding site" evidence="1">
    <location>
        <position position="884"/>
    </location>
    <ligand>
        <name>Zn(2+)</name>
        <dbReference type="ChEBI" id="CHEBI:29105"/>
        <label>2</label>
    </ligand>
</feature>
<feature type="binding site" evidence="1">
    <location>
        <position position="891"/>
    </location>
    <ligand>
        <name>Zn(2+)</name>
        <dbReference type="ChEBI" id="CHEBI:29105"/>
        <label>2</label>
    </ligand>
</feature>
<feature type="binding site" evidence="1">
    <location>
        <position position="894"/>
    </location>
    <ligand>
        <name>Zn(2+)</name>
        <dbReference type="ChEBI" id="CHEBI:29105"/>
        <label>2</label>
    </ligand>
</feature>
<evidence type="ECO:0000255" key="1">
    <source>
        <dbReference type="HAMAP-Rule" id="MF_01322"/>
    </source>
</evidence>
<sequence length="1417" mass="157417">MNNGILHQNYNSKKFDIIKISLASPEVIRSWSHGEVKKPETINYRTFKPERDGLFCAKIFGPIKDYECLCGKYKRLKHRGVVCERCGVEVEQAKVRRERMGHIDLVCPVVHIWYLKSLPSRIGLFLDMPLKNVEKVLYFESYIVTDPGMTPLEKKQLLTDEEYAEALENYGYEFEASMGAEAIRDLLADTDIESEIELLQAECEESKSTAKKEKAIKRLRLLETFQASGNKPEWMVMTVLPVLPPDLRPLVPIEGGRFATSDLNDLYRRVINRNNRLKKLLDLNAPDIIVRNEKRMLQEAVDALLDNGRRGRAVTGSNKRPLKSLADMIKGKQGRFRQNLLGKRVDYSGRSVITVGPSLRLHECGLPKKMALELFKPFVYSKLRLGGHATTIKQAKRMVELEEAVVWDILETVINEHPVLLNRAPTLHRLGIQAFEPRLIEGKAIQLHPLVCAAFNADFDGDQMAVHVPLTVESQLEARVLMMSTNNILSPASGQPIITPTQDIVLGLYYITREKEGARGEGKLFSSYEDVSRAYNSGTIDIHAKIKLRIDRQVFDTKGNTYNEKGVVNTTVGRALLLNILPEGLSFSLLNKVLVKKEISKIINQAFRVLGGKATVVLADKLMYAGFKYSTLSGVSVGVDDMTIPDNKEAKIEEAEKEIKQITEQYQSSLITENERYNNIINIWSKTSDEVGASMMDAISKDTVSINGEKKEIESFNSVYMMAKSGARGSYNQMRQLAGMRGLMAKPDGTMIETAITANFREGLSVLQYFTSTHGARKGLADTALKTANAGYLTRRLVDVAQDLVVIEEDCGTDDGLMFSAIVEDGEVKVPLVERALGRTLAADVVTEKGVVLLEAGTLLDENLVELLDDNGIDMIKVRSPITCKTRRGLCAKCYGRDLARERQVNVGESVGVIAAQSIGEPGTQLTMRTFHTGGAASLGITVSDIKVKTAGKIKFKNIRTVTNKEGQEIVISRAGEIIVSDTMGRVREQHKIPMGAVVPLASGKAVEIGDVIATWDPHAQPLITDVAGKVVLEDVIDGITSKHTYDDLTGQQTIEITSISQRTTSKNLKPVVKIVDEKGAELKSIPLAVGAVLNVADDSILEVGDIVAKIPLEGSKNKDITGGLPRVAELFEARRPKDAAILSPCDGMVRLGNRDTKEKQRIEIIDKNGHIVEEILLPKSRHLVVFDGEQVSRGDVLADGPTDPHDLLKYKGLEEFADYILIEAQSVYRMQGVVINDKHIETIVRQMLRKAVILDEGDSKFVKDESIELVRILEENDKLRKQGKKEVEYELVLMGITRSSLSTESFLSAASFQETTRVLTEASINSQIDNLRGLKENVLIGRLIPTGTGLAVRKESAKIEKMREELGVEDNMVFTDLSSFNPEEISFDSIQSQKEDKDINEDIEESLRNALESLDF</sequence>
<name>RPOC_FRAT1</name>
<keyword id="KW-0240">DNA-directed RNA polymerase</keyword>
<keyword id="KW-0460">Magnesium</keyword>
<keyword id="KW-0479">Metal-binding</keyword>
<keyword id="KW-0548">Nucleotidyltransferase</keyword>
<keyword id="KW-0804">Transcription</keyword>
<keyword id="KW-0808">Transferase</keyword>
<keyword id="KW-0862">Zinc</keyword>
<organism>
    <name type="scientific">Francisella tularensis subsp. tularensis (strain FSC 198)</name>
    <dbReference type="NCBI Taxonomy" id="393115"/>
    <lineage>
        <taxon>Bacteria</taxon>
        <taxon>Pseudomonadati</taxon>
        <taxon>Pseudomonadota</taxon>
        <taxon>Gammaproteobacteria</taxon>
        <taxon>Thiotrichales</taxon>
        <taxon>Francisellaceae</taxon>
        <taxon>Francisella</taxon>
    </lineage>
</organism>
<gene>
    <name evidence="1" type="primary">rpoC</name>
    <name type="ordered locus">FTF0145</name>
</gene>